<reference key="1">
    <citation type="journal article" date="2013" name="Nat. Genet.">
        <title>The nexin-dynein regulatory complex subunit DRC1 is essential for motile cilia function in algae and humans.</title>
        <authorList>
            <person name="Wirschell M."/>
            <person name="Olbrich H."/>
            <person name="Werner C."/>
            <person name="Tritschler D."/>
            <person name="Bower R."/>
            <person name="Sale W.S."/>
            <person name="Loges N.T."/>
            <person name="Pennekamp P."/>
            <person name="Lindberg S."/>
            <person name="Stenram U."/>
            <person name="Carlen B."/>
            <person name="Horak E."/>
            <person name="Kohler G."/>
            <person name="Nurnberg P."/>
            <person name="Nurnberg G."/>
            <person name="Porter M.E."/>
            <person name="Omran H."/>
        </authorList>
    </citation>
    <scope>NUCLEOTIDE SEQUENCE [MRNA]</scope>
    <scope>PROTEIN SEQUENCE OF 186-196 AND 238-251</scope>
    <scope>FUNCTION</scope>
    <scope>SUBCELLULAR LOCATION</scope>
    <scope>DISRUPTION PHENOTYPE</scope>
</reference>
<reference key="2">
    <citation type="journal article" date="2013" name="Mol. Biol. Cell">
        <title>The N-DRC forms a conserved biochemical complex that maintains outer doublet alignment and limits microtubule sliding in motile axonemes.</title>
        <authorList>
            <person name="Bower R."/>
            <person name="Tritschler D."/>
            <person name="Vanderwaal K."/>
            <person name="Perrone C.A."/>
            <person name="Mueller J."/>
            <person name="Fox L."/>
            <person name="Sale W.S."/>
            <person name="Porter M.E."/>
        </authorList>
    </citation>
    <scope>FUNCTION</scope>
    <scope>SUBUNIT</scope>
    <scope>SUBCELLULAR LOCATION</scope>
    <scope>INTERACTION WITH DRC4 AND DRC5</scope>
    <scope>IDENTIFICATION BY MASS SPECTROMETRY</scope>
</reference>
<reference key="3">
    <citation type="journal article" date="2015" name="Mol. Biol. Cell">
        <title>Detailed structural and biochemical characterization of the nexin-dynein regulatory complex.</title>
        <authorList>
            <person name="Oda T."/>
            <person name="Yanagisawa H."/>
            <person name="Kikkawa M."/>
        </authorList>
    </citation>
    <scope>FUNCTION</scope>
    <scope>SUBUNIT</scope>
    <scope>SUBCELLULAR LOCATION</scope>
</reference>
<reference key="4">
    <citation type="journal article" date="2018" name="Mol. Biol. Cell">
        <title>DRC2/CCDC65 is a central hub for assembly of the nexin-dynein regulatory complex and other regulators of ciliary and flagellar motility.</title>
        <authorList>
            <person name="Bower R."/>
            <person name="Tritschler D."/>
            <person name="Mills K.V."/>
            <person name="Heuser T."/>
            <person name="Nicastro D."/>
            <person name="Porter M.E."/>
        </authorList>
    </citation>
    <scope>FUNCTION</scope>
    <scope>SUBUNIT</scope>
    <scope>SUBCELLULAR LOCATION</scope>
    <scope>DISRUPTION PHENOTYPE</scope>
</reference>
<gene>
    <name type="primary">DRC1</name>
</gene>
<comment type="function">
    <text evidence="3 4 5 6">Component of the nexin-dynein regulatory complex (N-DRC) a key regulator of ciliary/flagellar motility which maintains the alignment and integrity of the distal axoneme and regulates microtubule sliding in motile axonemes. Plays a critical role in the assembly of N-DRC and also stabilizes the assembly of multiple inner dynein arms and radial spokes. Coassembles with DRC2 to form a central scaffold needed for assembly of the N-DRC and its attachment to the outer doublet microtubules (PubMed:23354437, PubMed:23427265, PubMed:25411337, PubMed:29167384).</text>
</comment>
<comment type="subunit">
    <text evidence="4 5 6">Component of the nexin-dynein regulatory complex (N-DRC) (PubMed:23427265, PubMed:25411337, PubMed:29167384). Interacts with DRC4 and DRC5 (PubMed:23427265).</text>
</comment>
<comment type="subcellular location">
    <subcellularLocation>
        <location evidence="3">Cytoplasm</location>
        <location evidence="3">Cytoskeleton</location>
        <location evidence="3">Cilium axoneme</location>
    </subcellularLocation>
    <subcellularLocation>
        <location evidence="4 5 6">Cytoplasm</location>
        <location evidence="4 5 6">Cytoskeleton</location>
        <location evidence="4 5 6">Flagellum axoneme</location>
    </subcellularLocation>
</comment>
<comment type="disruption phenotype">
    <text evidence="3 6">Defects in DRC1 give the pf3 phenotype characterized by reduced swimming speed and abnormal ciliary waveform characterized by reduced shear amplitude. Severe defects in assembly of the N-DRC and several inner-arm structures seen.</text>
</comment>
<comment type="similarity">
    <text evidence="7">Belongs to the DRC1 family.</text>
</comment>
<protein>
    <recommendedName>
        <fullName>Dynein regulatory complex protein 1</fullName>
    </recommendedName>
</protein>
<evidence type="ECO:0000255" key="1"/>
<evidence type="ECO:0000256" key="2">
    <source>
        <dbReference type="SAM" id="MobiDB-lite"/>
    </source>
</evidence>
<evidence type="ECO:0000269" key="3">
    <source>
    </source>
</evidence>
<evidence type="ECO:0000269" key="4">
    <source>
    </source>
</evidence>
<evidence type="ECO:0000269" key="5">
    <source>
    </source>
</evidence>
<evidence type="ECO:0000269" key="6">
    <source>
    </source>
</evidence>
<evidence type="ECO:0000305" key="7"/>
<keyword id="KW-0002">3D-structure</keyword>
<keyword id="KW-0966">Cell projection</keyword>
<keyword id="KW-0969">Cilium</keyword>
<keyword id="KW-0175">Coiled coil</keyword>
<keyword id="KW-0963">Cytoplasm</keyword>
<keyword id="KW-0206">Cytoskeleton</keyword>
<keyword id="KW-0903">Direct protein sequencing</keyword>
<keyword id="KW-0282">Flagellum</keyword>
<dbReference type="EMBL" id="JX311620">
    <property type="protein sequence ID" value="AFU81554.1"/>
    <property type="molecule type" value="mRNA"/>
</dbReference>
<dbReference type="PDB" id="7JU4">
    <property type="method" value="EM"/>
    <property type="resolution" value="3.40 A"/>
    <property type="chains" value="1=1-698"/>
</dbReference>
<dbReference type="PDB" id="8GLV">
    <property type="method" value="EM"/>
    <property type="resolution" value="3.10 A"/>
    <property type="chains" value="EA=1-698"/>
</dbReference>
<dbReference type="PDBsum" id="7JU4"/>
<dbReference type="PDBsum" id="8GLV"/>
<dbReference type="EMDB" id="EMD-22481"/>
<dbReference type="EMDB" id="EMD-40220"/>
<dbReference type="SMR" id="P0DL09"/>
<dbReference type="GO" id="GO:0005858">
    <property type="term" value="C:axonemal dynein complex"/>
    <property type="evidence" value="ECO:0007669"/>
    <property type="project" value="InterPro"/>
</dbReference>
<dbReference type="GO" id="GO:0005930">
    <property type="term" value="C:axoneme"/>
    <property type="evidence" value="ECO:0000314"/>
    <property type="project" value="UniProtKB"/>
</dbReference>
<dbReference type="GO" id="GO:0031514">
    <property type="term" value="C:motile cilium"/>
    <property type="evidence" value="ECO:0007669"/>
    <property type="project" value="UniProtKB-KW"/>
</dbReference>
<dbReference type="GO" id="GO:0070286">
    <property type="term" value="P:axonemal dynein complex assembly"/>
    <property type="evidence" value="ECO:0000315"/>
    <property type="project" value="UniProtKB"/>
</dbReference>
<dbReference type="InterPro" id="IPR039505">
    <property type="entry name" value="DRC1/2_N"/>
</dbReference>
<dbReference type="InterPro" id="IPR039750">
    <property type="entry name" value="DRC1/DRC2"/>
</dbReference>
<dbReference type="InterPro" id="IPR029440">
    <property type="entry name" value="DRC1_C"/>
</dbReference>
<dbReference type="PANTHER" id="PTHR21625:SF1">
    <property type="entry name" value="DYNEIN REGULATORY COMPLEX PROTEIN 1"/>
    <property type="match status" value="1"/>
</dbReference>
<dbReference type="PANTHER" id="PTHR21625">
    <property type="entry name" value="NYD-SP28 PROTEIN"/>
    <property type="match status" value="1"/>
</dbReference>
<dbReference type="Pfam" id="PF14772">
    <property type="entry name" value="NYD-SP28"/>
    <property type="match status" value="1"/>
</dbReference>
<dbReference type="Pfam" id="PF14775">
    <property type="entry name" value="NYD-SP28_assoc"/>
    <property type="match status" value="1"/>
</dbReference>
<feature type="chain" id="PRO_0000421992" description="Dynein regulatory complex protein 1">
    <location>
        <begin position="1"/>
        <end position="698"/>
    </location>
</feature>
<feature type="region of interest" description="Disordered" evidence="2">
    <location>
        <begin position="27"/>
        <end position="50"/>
    </location>
</feature>
<feature type="region of interest" description="Disordered" evidence="2">
    <location>
        <begin position="71"/>
        <end position="90"/>
    </location>
</feature>
<feature type="region of interest" description="Disordered" evidence="2">
    <location>
        <begin position="425"/>
        <end position="461"/>
    </location>
</feature>
<feature type="coiled-coil region" evidence="1">
    <location>
        <begin position="183"/>
        <end position="367"/>
    </location>
</feature>
<feature type="coiled-coil region" evidence="1">
    <location>
        <begin position="655"/>
        <end position="685"/>
    </location>
</feature>
<feature type="compositionally biased region" description="Basic and acidic residues" evidence="2">
    <location>
        <begin position="27"/>
        <end position="47"/>
    </location>
</feature>
<feature type="compositionally biased region" description="Basic and acidic residues" evidence="2">
    <location>
        <begin position="76"/>
        <end position="90"/>
    </location>
</feature>
<feature type="compositionally biased region" description="Gly residues" evidence="2">
    <location>
        <begin position="436"/>
        <end position="449"/>
    </location>
</feature>
<accession>P0DL09</accession>
<accession>L7PCP1</accession>
<organism>
    <name type="scientific">Chlamydomonas reinhardtii</name>
    <name type="common">Chlamydomonas smithii</name>
    <dbReference type="NCBI Taxonomy" id="3055"/>
    <lineage>
        <taxon>Eukaryota</taxon>
        <taxon>Viridiplantae</taxon>
        <taxon>Chlorophyta</taxon>
        <taxon>core chlorophytes</taxon>
        <taxon>Chlorophyceae</taxon>
        <taxon>CS clade</taxon>
        <taxon>Chlamydomonadales</taxon>
        <taxon>Chlamydomonadaceae</taxon>
        <taxon>Chlamydomonas</taxon>
    </lineage>
</organism>
<sequence>MDELQSQTEREARILARRKRIQERLAALREGDHGGGKEGENKEEIGKGKQQIIESKRRLMRVKYRTDQDVSSVRVAGDDRENQHRIQEEQTRQDLRAKLLAEAEQSARQNAAVAMRWADLFSIEVPQDLYNEIESQRQACERIIASKDKLIGEIKGELKKKDDEFVKTLKRQAEDIDTLLQYMSRQFVEVQNAYKEELDEIENAFLQERSDLLESNRREMQELFDKRSRLEQDFMDRYLAAVEAYQSQLEGHRQMDAEEYHILKIRLETDIQNLEQHLEAMRATYQLNTEKLEYNYRVLKEREKENTQTIESQKKKLSRQRDILSSLKQRYAETDRRYRDDNMKLTDEYKRITEQFKDLQSKFRHFELVDTKKYKEVWGMKEADVAALVRQLLQADKVLHEQQLGWDWRPPDDAVFAPVHGDAGSGGGAAAAATGGAAGGAAAAGGVGPNGEEESEEDAAARVREAELAERLRDGRNWGALGLLCDEAGFLIDIKARNMIERLPKDEQGQVKAEAILRSLGIADGSAFDALLEALSADSNIELRAKGMVAPQGRGMAEEKSDRGGTAVLVHPDEAVRRLKAFVEVYGTGPSRGPGGGGGGGGGMSGPMRVQGAMRRAAEREQEFWSRMTHVISDKHTRVWGALEKQLEKYLALLQERAGSLRDVESLQHQNNELRALLNQYLSSRINDELQIPPTQII</sequence>
<name>DRC1_CHLRE</name>
<proteinExistence type="evidence at protein level"/>